<name>YVBH_BACSU</name>
<organism>
    <name type="scientific">Bacillus subtilis (strain 168)</name>
    <dbReference type="NCBI Taxonomy" id="224308"/>
    <lineage>
        <taxon>Bacteria</taxon>
        <taxon>Bacillati</taxon>
        <taxon>Bacillota</taxon>
        <taxon>Bacilli</taxon>
        <taxon>Bacillales</taxon>
        <taxon>Bacillaceae</taxon>
        <taxon>Bacillus</taxon>
    </lineage>
</organism>
<dbReference type="EMBL" id="AL009126">
    <property type="protein sequence ID" value="CAB15391.1"/>
    <property type="molecule type" value="Genomic_DNA"/>
</dbReference>
<dbReference type="PIR" id="G70029">
    <property type="entry name" value="G70029"/>
</dbReference>
<dbReference type="RefSeq" id="NP_391266.1">
    <property type="nucleotide sequence ID" value="NC_000964.3"/>
</dbReference>
<dbReference type="RefSeq" id="WP_003243118.1">
    <property type="nucleotide sequence ID" value="NZ_OZ025638.1"/>
</dbReference>
<dbReference type="SMR" id="O32245"/>
<dbReference type="FunCoup" id="O32245">
    <property type="interactions" value="36"/>
</dbReference>
<dbReference type="STRING" id="224308.BSU33860"/>
<dbReference type="PaxDb" id="224308-BSU33860"/>
<dbReference type="EnsemblBacteria" id="CAB15391">
    <property type="protein sequence ID" value="CAB15391"/>
    <property type="gene ID" value="BSU_33860"/>
</dbReference>
<dbReference type="GeneID" id="938639"/>
<dbReference type="KEGG" id="bsu:BSU33860"/>
<dbReference type="PATRIC" id="fig|224308.179.peg.3671"/>
<dbReference type="eggNOG" id="ENOG502Z8UG">
    <property type="taxonomic scope" value="Bacteria"/>
</dbReference>
<dbReference type="InParanoid" id="O32245"/>
<dbReference type="OrthoDB" id="2351508at2"/>
<dbReference type="BioCyc" id="BSUB:BSU33860-MONOMER"/>
<dbReference type="Proteomes" id="UP000001570">
    <property type="component" value="Chromosome"/>
</dbReference>
<dbReference type="Gene3D" id="1.10.287.210">
    <property type="match status" value="1"/>
</dbReference>
<dbReference type="Gene3D" id="2.30.29.50">
    <property type="entry name" value="Bacterial Pleckstrin homology domain"/>
    <property type="match status" value="1"/>
</dbReference>
<dbReference type="InterPro" id="IPR012544">
    <property type="entry name" value="PHb"/>
</dbReference>
<dbReference type="InterPro" id="IPR037063">
    <property type="entry name" value="PHb_sf"/>
</dbReference>
<dbReference type="InterPro" id="IPR021722">
    <property type="entry name" value="YvbH_oligomer_dom"/>
</dbReference>
<dbReference type="PANTHER" id="PTHR35796">
    <property type="entry name" value="HYPOTHETICAL CYTOSOLIC PROTEIN"/>
    <property type="match status" value="1"/>
</dbReference>
<dbReference type="PANTHER" id="PTHR35796:SF2">
    <property type="entry name" value="YVBH-LIKE OLIGOMERISATION REGION"/>
    <property type="match status" value="1"/>
</dbReference>
<dbReference type="Pfam" id="PF08000">
    <property type="entry name" value="bPH_1"/>
    <property type="match status" value="1"/>
</dbReference>
<dbReference type="Pfam" id="PF11724">
    <property type="entry name" value="YvbH_ext"/>
    <property type="match status" value="1"/>
</dbReference>
<dbReference type="SUPFAM" id="SSF50729">
    <property type="entry name" value="PH domain-like"/>
    <property type="match status" value="1"/>
</dbReference>
<protein>
    <recommendedName>
        <fullName>Uncharacterized protein YvbH</fullName>
    </recommendedName>
</protein>
<gene>
    <name type="primary">yvbH</name>
    <name type="ordered locus">BSU33860</name>
</gene>
<keyword id="KW-0175">Coiled coil</keyword>
<keyword id="KW-1185">Reference proteome</keyword>
<feature type="chain" id="PRO_0000389006" description="Uncharacterized protein YvbH">
    <location>
        <begin position="1"/>
        <end position="204"/>
    </location>
</feature>
<feature type="coiled-coil region" evidence="1">
    <location>
        <begin position="109"/>
        <end position="136"/>
    </location>
</feature>
<reference key="1">
    <citation type="journal article" date="1997" name="Nature">
        <title>The complete genome sequence of the Gram-positive bacterium Bacillus subtilis.</title>
        <authorList>
            <person name="Kunst F."/>
            <person name="Ogasawara N."/>
            <person name="Moszer I."/>
            <person name="Albertini A.M."/>
            <person name="Alloni G."/>
            <person name="Azevedo V."/>
            <person name="Bertero M.G."/>
            <person name="Bessieres P."/>
            <person name="Bolotin A."/>
            <person name="Borchert S."/>
            <person name="Borriss R."/>
            <person name="Boursier L."/>
            <person name="Brans A."/>
            <person name="Braun M."/>
            <person name="Brignell S.C."/>
            <person name="Bron S."/>
            <person name="Brouillet S."/>
            <person name="Bruschi C.V."/>
            <person name="Caldwell B."/>
            <person name="Capuano V."/>
            <person name="Carter N.M."/>
            <person name="Choi S.-K."/>
            <person name="Codani J.-J."/>
            <person name="Connerton I.F."/>
            <person name="Cummings N.J."/>
            <person name="Daniel R.A."/>
            <person name="Denizot F."/>
            <person name="Devine K.M."/>
            <person name="Duesterhoeft A."/>
            <person name="Ehrlich S.D."/>
            <person name="Emmerson P.T."/>
            <person name="Entian K.-D."/>
            <person name="Errington J."/>
            <person name="Fabret C."/>
            <person name="Ferrari E."/>
            <person name="Foulger D."/>
            <person name="Fritz C."/>
            <person name="Fujita M."/>
            <person name="Fujita Y."/>
            <person name="Fuma S."/>
            <person name="Galizzi A."/>
            <person name="Galleron N."/>
            <person name="Ghim S.-Y."/>
            <person name="Glaser P."/>
            <person name="Goffeau A."/>
            <person name="Golightly E.J."/>
            <person name="Grandi G."/>
            <person name="Guiseppi G."/>
            <person name="Guy B.J."/>
            <person name="Haga K."/>
            <person name="Haiech J."/>
            <person name="Harwood C.R."/>
            <person name="Henaut A."/>
            <person name="Hilbert H."/>
            <person name="Holsappel S."/>
            <person name="Hosono S."/>
            <person name="Hullo M.-F."/>
            <person name="Itaya M."/>
            <person name="Jones L.-M."/>
            <person name="Joris B."/>
            <person name="Karamata D."/>
            <person name="Kasahara Y."/>
            <person name="Klaerr-Blanchard M."/>
            <person name="Klein C."/>
            <person name="Kobayashi Y."/>
            <person name="Koetter P."/>
            <person name="Koningstein G."/>
            <person name="Krogh S."/>
            <person name="Kumano M."/>
            <person name="Kurita K."/>
            <person name="Lapidus A."/>
            <person name="Lardinois S."/>
            <person name="Lauber J."/>
            <person name="Lazarevic V."/>
            <person name="Lee S.-M."/>
            <person name="Levine A."/>
            <person name="Liu H."/>
            <person name="Masuda S."/>
            <person name="Mauel C."/>
            <person name="Medigue C."/>
            <person name="Medina N."/>
            <person name="Mellado R.P."/>
            <person name="Mizuno M."/>
            <person name="Moestl D."/>
            <person name="Nakai S."/>
            <person name="Noback M."/>
            <person name="Noone D."/>
            <person name="O'Reilly M."/>
            <person name="Ogawa K."/>
            <person name="Ogiwara A."/>
            <person name="Oudega B."/>
            <person name="Park S.-H."/>
            <person name="Parro V."/>
            <person name="Pohl T.M."/>
            <person name="Portetelle D."/>
            <person name="Porwollik S."/>
            <person name="Prescott A.M."/>
            <person name="Presecan E."/>
            <person name="Pujic P."/>
            <person name="Purnelle B."/>
            <person name="Rapoport G."/>
            <person name="Rey M."/>
            <person name="Reynolds S."/>
            <person name="Rieger M."/>
            <person name="Rivolta C."/>
            <person name="Rocha E."/>
            <person name="Roche B."/>
            <person name="Rose M."/>
            <person name="Sadaie Y."/>
            <person name="Sato T."/>
            <person name="Scanlan E."/>
            <person name="Schleich S."/>
            <person name="Schroeter R."/>
            <person name="Scoffone F."/>
            <person name="Sekiguchi J."/>
            <person name="Sekowska A."/>
            <person name="Seror S.J."/>
            <person name="Serror P."/>
            <person name="Shin B.-S."/>
            <person name="Soldo B."/>
            <person name="Sorokin A."/>
            <person name="Tacconi E."/>
            <person name="Takagi T."/>
            <person name="Takahashi H."/>
            <person name="Takemaru K."/>
            <person name="Takeuchi M."/>
            <person name="Tamakoshi A."/>
            <person name="Tanaka T."/>
            <person name="Terpstra P."/>
            <person name="Tognoni A."/>
            <person name="Tosato V."/>
            <person name="Uchiyama S."/>
            <person name="Vandenbol M."/>
            <person name="Vannier F."/>
            <person name="Vassarotti A."/>
            <person name="Viari A."/>
            <person name="Wambutt R."/>
            <person name="Wedler E."/>
            <person name="Wedler H."/>
            <person name="Weitzenegger T."/>
            <person name="Winters P."/>
            <person name="Wipat A."/>
            <person name="Yamamoto H."/>
            <person name="Yamane K."/>
            <person name="Yasumoto K."/>
            <person name="Yata K."/>
            <person name="Yoshida K."/>
            <person name="Yoshikawa H.-F."/>
            <person name="Zumstein E."/>
            <person name="Yoshikawa H."/>
            <person name="Danchin A."/>
        </authorList>
    </citation>
    <scope>NUCLEOTIDE SEQUENCE [LARGE SCALE GENOMIC DNA]</scope>
    <source>
        <strain>168</strain>
    </source>
</reference>
<proteinExistence type="predicted"/>
<sequence length="204" mass="23802">MFKKIAADALGLSDIGKIIEPQDYDKTDADDYVMHEDNEKIYFLIKTKADEYCFTNLALIHVDGERATSSKRTLKRYPYSQYKISDVFLETAGKVDLDVEIKFKLGGEQFDIDVHKDQIEKLKDLYKALLRIAETTYENDILINQAEQSLDKAVTILHHTRPEHVNIETQYKELTEFGFTWLTSVRSQYHIKDFGDVFEKYINN</sequence>
<evidence type="ECO:0000255" key="1"/>
<accession>O32245</accession>